<accession>Q7SXG4</accession>
<accession>A7MCK7</accession>
<accession>B0S543</accession>
<accession>B0S544</accession>
<feature type="chain" id="PRO_0000268872" description="SUMO-activating enzyme subunit 2">
    <location>
        <begin position="1"/>
        <end position="650"/>
    </location>
</feature>
<feature type="region of interest" description="Disordered" evidence="4">
    <location>
        <begin position="554"/>
        <end position="650"/>
    </location>
</feature>
<feature type="compositionally biased region" description="Polar residues" evidence="4">
    <location>
        <begin position="572"/>
        <end position="586"/>
    </location>
</feature>
<feature type="compositionally biased region" description="Acidic residues" evidence="4">
    <location>
        <begin position="590"/>
        <end position="603"/>
    </location>
</feature>
<feature type="compositionally biased region" description="Acidic residues" evidence="4">
    <location>
        <begin position="638"/>
        <end position="650"/>
    </location>
</feature>
<feature type="active site" description="Glycyl thioester intermediate" evidence="3">
    <location>
        <position position="174"/>
    </location>
</feature>
<feature type="binding site" evidence="1">
    <location>
        <begin position="25"/>
        <end position="30"/>
    </location>
    <ligand>
        <name>ATP</name>
        <dbReference type="ChEBI" id="CHEBI:30616"/>
    </ligand>
</feature>
<feature type="binding site" evidence="1">
    <location>
        <position position="49"/>
    </location>
    <ligand>
        <name>ATP</name>
        <dbReference type="ChEBI" id="CHEBI:30616"/>
    </ligand>
</feature>
<feature type="binding site" evidence="1">
    <location>
        <begin position="57"/>
        <end position="60"/>
    </location>
    <ligand>
        <name>ATP</name>
        <dbReference type="ChEBI" id="CHEBI:30616"/>
    </ligand>
</feature>
<feature type="binding site" evidence="1">
    <location>
        <position position="73"/>
    </location>
    <ligand>
        <name>ATP</name>
        <dbReference type="ChEBI" id="CHEBI:30616"/>
    </ligand>
</feature>
<feature type="binding site" evidence="1">
    <location>
        <begin position="96"/>
        <end position="97"/>
    </location>
    <ligand>
        <name>ATP</name>
        <dbReference type="ChEBI" id="CHEBI:30616"/>
    </ligand>
</feature>
<feature type="binding site" evidence="1">
    <location>
        <begin position="118"/>
        <end position="123"/>
    </location>
    <ligand>
        <name>ATP</name>
        <dbReference type="ChEBI" id="CHEBI:30616"/>
    </ligand>
</feature>
<feature type="binding site" evidence="1">
    <location>
        <position position="159"/>
    </location>
    <ligand>
        <name>Zn(2+)</name>
        <dbReference type="ChEBI" id="CHEBI:29105"/>
    </ligand>
</feature>
<feature type="binding site" evidence="1">
    <location>
        <position position="162"/>
    </location>
    <ligand>
        <name>Zn(2+)</name>
        <dbReference type="ChEBI" id="CHEBI:29105"/>
    </ligand>
</feature>
<feature type="binding site" evidence="1">
    <location>
        <position position="446"/>
    </location>
    <ligand>
        <name>Zn(2+)</name>
        <dbReference type="ChEBI" id="CHEBI:29105"/>
    </ligand>
</feature>
<feature type="binding site" evidence="1">
    <location>
        <position position="449"/>
    </location>
    <ligand>
        <name>Zn(2+)</name>
        <dbReference type="ChEBI" id="CHEBI:29105"/>
    </ligand>
</feature>
<feature type="modified residue" description="Phosphoserine" evidence="5">
    <location>
        <position position="599"/>
    </location>
</feature>
<feature type="cross-link" description="Glycyl lysine isopeptide (Lys-Gly) (interchain with G-Cter in SUMO)" evidence="1">
    <location>
        <position position="191"/>
    </location>
</feature>
<feature type="cross-link" description="Glycyl lysine isopeptide (Lys-Gly) (interchain with G-Cter in SUMO1)" evidence="1">
    <location>
        <position position="237"/>
    </location>
</feature>
<feature type="cross-link" description="Glycyl lysine isopeptide (Lys-Gly) (interchain with G-Cter in SUMO)" evidence="1">
    <location>
        <position position="258"/>
    </location>
</feature>
<feature type="cross-link" description="Glycyl lysine isopeptide (Lys-Gly) (interchain with G-Cter in SUMO)" evidence="1">
    <location>
        <position position="282"/>
    </location>
</feature>
<feature type="cross-link" description="Glycyl lysine isopeptide (Lys-Gly) (interchain with G-Cter in SUMO)" evidence="1">
    <location>
        <position position="286"/>
    </location>
</feature>
<feature type="cross-link" description="Glycyl lysine isopeptide (Lys-Gly) (interchain with G-Cter in SUMO)" evidence="1">
    <location>
        <position position="618"/>
    </location>
</feature>
<feature type="cross-link" description="Glycyl lysine isopeptide (Lys-Gly) (interchain with G-Cter in SUMO)" evidence="1">
    <location>
        <position position="630"/>
    </location>
</feature>
<feature type="splice variant" id="VSP_034008" description="In isoform 2." evidence="7">
    <location>
        <begin position="259"/>
        <end position="268"/>
    </location>
</feature>
<feature type="sequence conflict" description="In Ref. 1; CAQ13481." evidence="8" ref="1">
    <original>L</original>
    <variation>LA</variation>
    <location>
        <position position="301"/>
    </location>
</feature>
<feature type="sequence conflict" description="In Ref. 2; AAH55614." evidence="8" ref="2">
    <original>R</original>
    <variation>H</variation>
    <location>
        <position position="521"/>
    </location>
</feature>
<feature type="sequence conflict" description="In Ref. 2; AAI52219." evidence="8" ref="2">
    <original>A</original>
    <variation>P</variation>
    <location>
        <position position="572"/>
    </location>
</feature>
<feature type="sequence conflict" description="In Ref. 2; AAI52219." evidence="8" ref="2">
    <original>A</original>
    <variation>ADD</variation>
    <location>
        <position position="639"/>
    </location>
</feature>
<proteinExistence type="evidence at protein level"/>
<protein>
    <recommendedName>
        <fullName>SUMO-activating enzyme subunit 2</fullName>
        <ecNumber>2.3.2.-</ecNumber>
    </recommendedName>
    <alternativeName>
        <fullName>Ubiquitin-like 1-activating enzyme E1B</fullName>
    </alternativeName>
    <alternativeName>
        <fullName>Ubiquitin-like modifier-activating enzyme 2</fullName>
    </alternativeName>
</protein>
<dbReference type="EC" id="2.3.2.-"/>
<dbReference type="EMBL" id="BX005103">
    <property type="protein sequence ID" value="CAQ13480.1"/>
    <property type="molecule type" value="Genomic_DNA"/>
</dbReference>
<dbReference type="EMBL" id="BX005103">
    <property type="protein sequence ID" value="CAQ13481.1"/>
    <property type="molecule type" value="Genomic_DNA"/>
</dbReference>
<dbReference type="EMBL" id="BC055614">
    <property type="protein sequence ID" value="AAH55614.1"/>
    <property type="molecule type" value="mRNA"/>
</dbReference>
<dbReference type="EMBL" id="BC152218">
    <property type="protein sequence ID" value="AAI52219.1"/>
    <property type="molecule type" value="mRNA"/>
</dbReference>
<dbReference type="RefSeq" id="NP_998528.1">
    <property type="nucleotide sequence ID" value="NM_213363.1"/>
</dbReference>
<dbReference type="SMR" id="Q7SXG4"/>
<dbReference type="FunCoup" id="Q7SXG4">
    <property type="interactions" value="3141"/>
</dbReference>
<dbReference type="STRING" id="7955.ENSDARP00000139796"/>
<dbReference type="iPTMnet" id="Q7SXG4"/>
<dbReference type="PaxDb" id="7955-ENSDARP00000102182"/>
<dbReference type="PeptideAtlas" id="Q7SXG4"/>
<dbReference type="Ensembl" id="ENSDART00000171801">
    <molecule id="Q7SXG4-1"/>
    <property type="protein sequence ID" value="ENSDARP00000139796"/>
    <property type="gene ID" value="ENSDARG00000101332"/>
</dbReference>
<dbReference type="GeneID" id="406672"/>
<dbReference type="KEGG" id="dre:406672"/>
<dbReference type="AGR" id="ZFIN:ZDB-GENE-040426-2681"/>
<dbReference type="CTD" id="10054"/>
<dbReference type="ZFIN" id="ZDB-GENE-040426-2681">
    <property type="gene designation" value="uba2"/>
</dbReference>
<dbReference type="eggNOG" id="KOG2013">
    <property type="taxonomic scope" value="Eukaryota"/>
</dbReference>
<dbReference type="InParanoid" id="Q7SXG4"/>
<dbReference type="OMA" id="CKEACKC"/>
<dbReference type="OrthoDB" id="10255449at2759"/>
<dbReference type="PhylomeDB" id="Q7SXG4"/>
<dbReference type="Reactome" id="R-DRE-3065676">
    <property type="pathway name" value="SUMO is conjugated to E1 (UBA2:SAE1)"/>
</dbReference>
<dbReference type="Reactome" id="R-DRE-3065678">
    <property type="pathway name" value="SUMO is transferred from E1 to E2 (UBE2I, UBC9)"/>
</dbReference>
<dbReference type="UniPathway" id="UPA00886"/>
<dbReference type="PRO" id="PR:Q7SXG4"/>
<dbReference type="Proteomes" id="UP000000437">
    <property type="component" value="Alternate scaffold 25"/>
</dbReference>
<dbReference type="Proteomes" id="UP000000437">
    <property type="component" value="Chromosome 25"/>
</dbReference>
<dbReference type="Bgee" id="ENSDARG00000101332">
    <property type="expression patterns" value="Expressed in gastrula and 29 other cell types or tissues"/>
</dbReference>
<dbReference type="ExpressionAtlas" id="Q7SXG4">
    <property type="expression patterns" value="baseline and differential"/>
</dbReference>
<dbReference type="GO" id="GO:0005737">
    <property type="term" value="C:cytoplasm"/>
    <property type="evidence" value="ECO:0000318"/>
    <property type="project" value="GO_Central"/>
</dbReference>
<dbReference type="GO" id="GO:0031510">
    <property type="term" value="C:SUMO activating enzyme complex"/>
    <property type="evidence" value="ECO:0000250"/>
    <property type="project" value="UniProtKB"/>
</dbReference>
<dbReference type="GO" id="GO:0005524">
    <property type="term" value="F:ATP binding"/>
    <property type="evidence" value="ECO:0007669"/>
    <property type="project" value="UniProtKB-KW"/>
</dbReference>
<dbReference type="GO" id="GO:0046872">
    <property type="term" value="F:metal ion binding"/>
    <property type="evidence" value="ECO:0007669"/>
    <property type="project" value="UniProtKB-KW"/>
</dbReference>
<dbReference type="GO" id="GO:0019948">
    <property type="term" value="F:SUMO activating enzyme activity"/>
    <property type="evidence" value="ECO:0000250"/>
    <property type="project" value="UniProtKB"/>
</dbReference>
<dbReference type="GO" id="GO:0016740">
    <property type="term" value="F:transferase activity"/>
    <property type="evidence" value="ECO:0007669"/>
    <property type="project" value="UniProtKB-KW"/>
</dbReference>
<dbReference type="GO" id="GO:0007420">
    <property type="term" value="P:brain development"/>
    <property type="evidence" value="ECO:0000315"/>
    <property type="project" value="ZFIN"/>
</dbReference>
<dbReference type="GO" id="GO:0033334">
    <property type="term" value="P:fin morphogenesis"/>
    <property type="evidence" value="ECO:0000315"/>
    <property type="project" value="ZFIN"/>
</dbReference>
<dbReference type="GO" id="GO:0016925">
    <property type="term" value="P:protein sumoylation"/>
    <property type="evidence" value="ECO:0000250"/>
    <property type="project" value="UniProtKB"/>
</dbReference>
<dbReference type="GO" id="GO:0061035">
    <property type="term" value="P:regulation of cartilage development"/>
    <property type="evidence" value="ECO:0000315"/>
    <property type="project" value="ZFIN"/>
</dbReference>
<dbReference type="GO" id="GO:0061074">
    <property type="term" value="P:regulation of neural retina development"/>
    <property type="evidence" value="ECO:0000315"/>
    <property type="project" value="ZFIN"/>
</dbReference>
<dbReference type="CDD" id="cd01489">
    <property type="entry name" value="Uba2_SUMO"/>
    <property type="match status" value="1"/>
</dbReference>
<dbReference type="FunFam" id="1.10.10.520:FF:000002">
    <property type="entry name" value="SUMO-activating enzyme subunit 2"/>
    <property type="match status" value="1"/>
</dbReference>
<dbReference type="FunFam" id="3.10.290.20:FF:000002">
    <property type="entry name" value="SUMO-activating enzyme subunit 2"/>
    <property type="match status" value="1"/>
</dbReference>
<dbReference type="FunFam" id="3.40.50.720:FF:000618">
    <property type="entry name" value="SUMO-activating enzyme subunit 2"/>
    <property type="match status" value="1"/>
</dbReference>
<dbReference type="FunFam" id="3.50.50.80:FF:000002">
    <property type="entry name" value="SUMO-activating enzyme subunit 2"/>
    <property type="match status" value="1"/>
</dbReference>
<dbReference type="Gene3D" id="1.10.10.520">
    <property type="entry name" value="Ubiquitin activating enzymes (Uba3). Chain: B, domain 2"/>
    <property type="match status" value="1"/>
</dbReference>
<dbReference type="Gene3D" id="3.50.50.80">
    <property type="entry name" value="Ubiquitin-activating enzyme E1, inactive adenylation domain, subdomain 1"/>
    <property type="match status" value="1"/>
</dbReference>
<dbReference type="Gene3D" id="3.10.290.20">
    <property type="entry name" value="Ubiquitin-like 2 activating enzyme e1b. Chain: B, domain 3"/>
    <property type="match status" value="1"/>
</dbReference>
<dbReference type="InterPro" id="IPR045886">
    <property type="entry name" value="ThiF/MoeB/HesA"/>
</dbReference>
<dbReference type="InterPro" id="IPR000594">
    <property type="entry name" value="ThiF_NAD_FAD-bd"/>
</dbReference>
<dbReference type="InterPro" id="IPR028077">
    <property type="entry name" value="UAE_UbL_dom"/>
</dbReference>
<dbReference type="InterPro" id="IPR042449">
    <property type="entry name" value="Ub-E1_IAD_1"/>
</dbReference>
<dbReference type="InterPro" id="IPR023318">
    <property type="entry name" value="Ub_act_enz_dom_a_sf"/>
</dbReference>
<dbReference type="InterPro" id="IPR030661">
    <property type="entry name" value="Uba2"/>
</dbReference>
<dbReference type="InterPro" id="IPR032426">
    <property type="entry name" value="UBA2_C"/>
</dbReference>
<dbReference type="InterPro" id="IPR035985">
    <property type="entry name" value="Ubiquitin-activating_enz"/>
</dbReference>
<dbReference type="InterPro" id="IPR033127">
    <property type="entry name" value="UBQ-activ_enz_E1_Cys_AS"/>
</dbReference>
<dbReference type="PANTHER" id="PTHR10953:SF5">
    <property type="entry name" value="SUMO-ACTIVATING ENZYME SUBUNIT 2"/>
    <property type="match status" value="1"/>
</dbReference>
<dbReference type="PANTHER" id="PTHR10953">
    <property type="entry name" value="UBIQUITIN-ACTIVATING ENZYME E1"/>
    <property type="match status" value="1"/>
</dbReference>
<dbReference type="Pfam" id="PF00899">
    <property type="entry name" value="ThiF"/>
    <property type="match status" value="1"/>
</dbReference>
<dbReference type="Pfam" id="PF14732">
    <property type="entry name" value="UAE_UbL"/>
    <property type="match status" value="1"/>
</dbReference>
<dbReference type="Pfam" id="PF16195">
    <property type="entry name" value="UBA2_C"/>
    <property type="match status" value="1"/>
</dbReference>
<dbReference type="PIRSF" id="PIRSF039133">
    <property type="entry name" value="SUMO_E1B"/>
    <property type="match status" value="1"/>
</dbReference>
<dbReference type="SUPFAM" id="SSF69572">
    <property type="entry name" value="Activating enzymes of the ubiquitin-like proteins"/>
    <property type="match status" value="1"/>
</dbReference>
<dbReference type="PROSITE" id="PS00865">
    <property type="entry name" value="UBIQUITIN_ACTIVAT_2"/>
    <property type="match status" value="1"/>
</dbReference>
<keyword id="KW-0025">Alternative splicing</keyword>
<keyword id="KW-0067">ATP-binding</keyword>
<keyword id="KW-0963">Cytoplasm</keyword>
<keyword id="KW-1017">Isopeptide bond</keyword>
<keyword id="KW-0479">Metal-binding</keyword>
<keyword id="KW-0547">Nucleotide-binding</keyword>
<keyword id="KW-0539">Nucleus</keyword>
<keyword id="KW-0597">Phosphoprotein</keyword>
<keyword id="KW-1185">Reference proteome</keyword>
<keyword id="KW-0808">Transferase</keyword>
<keyword id="KW-0832">Ubl conjugation</keyword>
<keyword id="KW-0833">Ubl conjugation pathway</keyword>
<keyword id="KW-0862">Zinc</keyword>
<evidence type="ECO:0000250" key="1"/>
<evidence type="ECO:0000250" key="2">
    <source>
        <dbReference type="UniProtKB" id="Q9UBT2"/>
    </source>
</evidence>
<evidence type="ECO:0000255" key="3">
    <source>
        <dbReference type="PROSITE-ProRule" id="PRU10132"/>
    </source>
</evidence>
<evidence type="ECO:0000256" key="4">
    <source>
        <dbReference type="SAM" id="MobiDB-lite"/>
    </source>
</evidence>
<evidence type="ECO:0000269" key="5">
    <source>
    </source>
</evidence>
<evidence type="ECO:0000269" key="6">
    <source>
    </source>
</evidence>
<evidence type="ECO:0000303" key="7">
    <source ref="2"/>
</evidence>
<evidence type="ECO:0000305" key="8"/>
<reference key="1">
    <citation type="journal article" date="2013" name="Nature">
        <title>The zebrafish reference genome sequence and its relationship to the human genome.</title>
        <authorList>
            <person name="Howe K."/>
            <person name="Clark M.D."/>
            <person name="Torroja C.F."/>
            <person name="Torrance J."/>
            <person name="Berthelot C."/>
            <person name="Muffato M."/>
            <person name="Collins J.E."/>
            <person name="Humphray S."/>
            <person name="McLaren K."/>
            <person name="Matthews L."/>
            <person name="McLaren S."/>
            <person name="Sealy I."/>
            <person name="Caccamo M."/>
            <person name="Churcher C."/>
            <person name="Scott C."/>
            <person name="Barrett J.C."/>
            <person name="Koch R."/>
            <person name="Rauch G.J."/>
            <person name="White S."/>
            <person name="Chow W."/>
            <person name="Kilian B."/>
            <person name="Quintais L.T."/>
            <person name="Guerra-Assuncao J.A."/>
            <person name="Zhou Y."/>
            <person name="Gu Y."/>
            <person name="Yen J."/>
            <person name="Vogel J.H."/>
            <person name="Eyre T."/>
            <person name="Redmond S."/>
            <person name="Banerjee R."/>
            <person name="Chi J."/>
            <person name="Fu B."/>
            <person name="Langley E."/>
            <person name="Maguire S.F."/>
            <person name="Laird G.K."/>
            <person name="Lloyd D."/>
            <person name="Kenyon E."/>
            <person name="Donaldson S."/>
            <person name="Sehra H."/>
            <person name="Almeida-King J."/>
            <person name="Loveland J."/>
            <person name="Trevanion S."/>
            <person name="Jones M."/>
            <person name="Quail M."/>
            <person name="Willey D."/>
            <person name="Hunt A."/>
            <person name="Burton J."/>
            <person name="Sims S."/>
            <person name="McLay K."/>
            <person name="Plumb B."/>
            <person name="Davis J."/>
            <person name="Clee C."/>
            <person name="Oliver K."/>
            <person name="Clark R."/>
            <person name="Riddle C."/>
            <person name="Elliot D."/>
            <person name="Threadgold G."/>
            <person name="Harden G."/>
            <person name="Ware D."/>
            <person name="Begum S."/>
            <person name="Mortimore B."/>
            <person name="Kerry G."/>
            <person name="Heath P."/>
            <person name="Phillimore B."/>
            <person name="Tracey A."/>
            <person name="Corby N."/>
            <person name="Dunn M."/>
            <person name="Johnson C."/>
            <person name="Wood J."/>
            <person name="Clark S."/>
            <person name="Pelan S."/>
            <person name="Griffiths G."/>
            <person name="Smith M."/>
            <person name="Glithero R."/>
            <person name="Howden P."/>
            <person name="Barker N."/>
            <person name="Lloyd C."/>
            <person name="Stevens C."/>
            <person name="Harley J."/>
            <person name="Holt K."/>
            <person name="Panagiotidis G."/>
            <person name="Lovell J."/>
            <person name="Beasley H."/>
            <person name="Henderson C."/>
            <person name="Gordon D."/>
            <person name="Auger K."/>
            <person name="Wright D."/>
            <person name="Collins J."/>
            <person name="Raisen C."/>
            <person name="Dyer L."/>
            <person name="Leung K."/>
            <person name="Robertson L."/>
            <person name="Ambridge K."/>
            <person name="Leongamornlert D."/>
            <person name="McGuire S."/>
            <person name="Gilderthorp R."/>
            <person name="Griffiths C."/>
            <person name="Manthravadi D."/>
            <person name="Nichol S."/>
            <person name="Barker G."/>
            <person name="Whitehead S."/>
            <person name="Kay M."/>
            <person name="Brown J."/>
            <person name="Murnane C."/>
            <person name="Gray E."/>
            <person name="Humphries M."/>
            <person name="Sycamore N."/>
            <person name="Barker D."/>
            <person name="Saunders D."/>
            <person name="Wallis J."/>
            <person name="Babbage A."/>
            <person name="Hammond S."/>
            <person name="Mashreghi-Mohammadi M."/>
            <person name="Barr L."/>
            <person name="Martin S."/>
            <person name="Wray P."/>
            <person name="Ellington A."/>
            <person name="Matthews N."/>
            <person name="Ellwood M."/>
            <person name="Woodmansey R."/>
            <person name="Clark G."/>
            <person name="Cooper J."/>
            <person name="Tromans A."/>
            <person name="Grafham D."/>
            <person name="Skuce C."/>
            <person name="Pandian R."/>
            <person name="Andrews R."/>
            <person name="Harrison E."/>
            <person name="Kimberley A."/>
            <person name="Garnett J."/>
            <person name="Fosker N."/>
            <person name="Hall R."/>
            <person name="Garner P."/>
            <person name="Kelly D."/>
            <person name="Bird C."/>
            <person name="Palmer S."/>
            <person name="Gehring I."/>
            <person name="Berger A."/>
            <person name="Dooley C.M."/>
            <person name="Ersan-Urun Z."/>
            <person name="Eser C."/>
            <person name="Geiger H."/>
            <person name="Geisler M."/>
            <person name="Karotki L."/>
            <person name="Kirn A."/>
            <person name="Konantz J."/>
            <person name="Konantz M."/>
            <person name="Oberlander M."/>
            <person name="Rudolph-Geiger S."/>
            <person name="Teucke M."/>
            <person name="Lanz C."/>
            <person name="Raddatz G."/>
            <person name="Osoegawa K."/>
            <person name="Zhu B."/>
            <person name="Rapp A."/>
            <person name="Widaa S."/>
            <person name="Langford C."/>
            <person name="Yang F."/>
            <person name="Schuster S.C."/>
            <person name="Carter N.P."/>
            <person name="Harrow J."/>
            <person name="Ning Z."/>
            <person name="Herrero J."/>
            <person name="Searle S.M."/>
            <person name="Enright A."/>
            <person name="Geisler R."/>
            <person name="Plasterk R.H."/>
            <person name="Lee C."/>
            <person name="Westerfield M."/>
            <person name="de Jong P.J."/>
            <person name="Zon L.I."/>
            <person name="Postlethwait J.H."/>
            <person name="Nusslein-Volhard C."/>
            <person name="Hubbard T.J."/>
            <person name="Roest Crollius H."/>
            <person name="Rogers J."/>
            <person name="Stemple D.L."/>
        </authorList>
    </citation>
    <scope>NUCLEOTIDE SEQUENCE [LARGE SCALE GENOMIC DNA]</scope>
    <source>
        <strain>Tuebingen</strain>
    </source>
</reference>
<reference key="2">
    <citation type="submission" date="2007-08" db="EMBL/GenBank/DDBJ databases">
        <authorList>
            <consortium name="NIH - Zebrafish Gene Collection (ZGC) project"/>
        </authorList>
    </citation>
    <scope>NUCLEOTIDE SEQUENCE [LARGE SCALE MRNA] (ISOFORM 2)</scope>
    <source>
        <strain>SJD</strain>
        <tissue>Embryo</tissue>
    </source>
</reference>
<reference key="3">
    <citation type="journal article" date="2008" name="J. Proteome Res.">
        <title>Online automated in vivo zebrafish phosphoproteomics: from large-scale analysis down to a single embryo.</title>
        <authorList>
            <person name="Lemeer S."/>
            <person name="Pinkse M.W.H."/>
            <person name="Mohammed S."/>
            <person name="van Breukelen B."/>
            <person name="den Hertog J."/>
            <person name="Slijper M."/>
            <person name="Heck A.J.R."/>
        </authorList>
    </citation>
    <scope>PHOSPHORYLATION [LARGE SCALE ANALYSIS] AT SER-599</scope>
    <scope>IDENTIFICATION BY MASS SPECTROMETRY</scope>
    <source>
        <tissue>Embryo</tissue>
    </source>
</reference>
<reference key="4">
    <citation type="journal article" date="2021" name="Genet. Med.">
        <title>UBA2 variants underlie a recognizable syndrome with variable aplasia cutis congenita and ectrodactyly.</title>
        <authorList>
            <person name="Schnur R.E."/>
            <person name="Yousaf S."/>
            <person name="Liu J."/>
            <person name="Chung W.K."/>
            <person name="Rhodes L."/>
            <person name="Marble M."/>
            <person name="Zambrano R.M."/>
            <person name="Sobreira N."/>
            <person name="Jayakar P."/>
            <person name="Pierpont M.E."/>
            <person name="Schultz M.J."/>
            <person name="Pichurin P.N."/>
            <person name="Olson R.J."/>
            <person name="Graham G.E."/>
            <person name="Osmond M."/>
            <person name="Contreras-Garcia G.A."/>
            <person name="Campo-Neira K.A."/>
            <person name="Penaloza-Mantilla C.A."/>
            <person name="Flage M."/>
            <person name="Kuppa S."/>
            <person name="Navarro K."/>
            <person name="Sacoto M.J.G."/>
            <person name="Wentzensen I.M."/>
            <person name="Scarano M.I."/>
            <person name="Juusola J."/>
            <person name="Prada C.E."/>
            <person name="Hufnagel R.B."/>
        </authorList>
    </citation>
    <scope>DISRUPTION PHENOTYPE</scope>
    <scope>TISSUE SPECIFICITY</scope>
</reference>
<name>SAE2_DANRE</name>
<sequence>MAELVGPLRKQLADSLSSCRVLVVGAGGIGCELLKNLVLTGFKNIEVIDLDTIDVSNLNRQFLFQKKHVGKSKAQVAKESVLRFCPSANITAYHDSIMNPDYNVEFFRNFQLVMNALDNRAARNHVNRMCLAADIPLIESGTAGYLGQVTVIKKGQTECYECQPKPTQKTFPGCTIRNTPSEPIHCIVWAKYLFNQLFGEEDADQEVSPDTADPEAAWNPADAAARATASDQDGDIKRVSTKEWARSTGYDPIKLFNKVSALSQTSPYLFKDDIMYLLTMDKLWKKRKAPLPLEWEEINQLGSQEQVIGSGLKDQQVLGVQGYAQLFQHSVETLRSQLKEKGDGAELVWDKDDPPAMDFVTAASNLRMNVFSMNMKSRFDVKSMAGNIIPAIATTNAVIAGLIVLEALKILNSDFEQCRTIFLNKQPNPRKKLLVPCALDPPNASCYVCASKPEVTVKLNVHKTMVQALQDKILKEKFGMVAPDVQIEDGKGTILISSEEGETEANNNKFLSDFGIRNGSRLQADDFLQDYTLLVNVIHSEELEKDVEFEVVGDAPDKAPAPSAPEEGKNIANGNKDSAQPSTSSKAAVEDDDVLLVDSDEEPSSSTMDTESSNRKRKHHDAETDDASSKRKRLDQQPADDDDEDIIALD</sequence>
<organism>
    <name type="scientific">Danio rerio</name>
    <name type="common">Zebrafish</name>
    <name type="synonym">Brachydanio rerio</name>
    <dbReference type="NCBI Taxonomy" id="7955"/>
    <lineage>
        <taxon>Eukaryota</taxon>
        <taxon>Metazoa</taxon>
        <taxon>Chordata</taxon>
        <taxon>Craniata</taxon>
        <taxon>Vertebrata</taxon>
        <taxon>Euteleostomi</taxon>
        <taxon>Actinopterygii</taxon>
        <taxon>Neopterygii</taxon>
        <taxon>Teleostei</taxon>
        <taxon>Ostariophysi</taxon>
        <taxon>Cypriniformes</taxon>
        <taxon>Danionidae</taxon>
        <taxon>Danioninae</taxon>
        <taxon>Danio</taxon>
    </lineage>
</organism>
<comment type="function">
    <text evidence="2">The heterodimer acts as an E1 ligase for sumo1, sumo2, and sumo3. It mediates ATP-dependent activation of sumo proteins followed by formation of a thioester bond between a sumo protein and a conserved active site cysteine residue on uba2/sae2 (By similarity).</text>
</comment>
<comment type="pathway">
    <text>Protein modification; protein sumoylation.</text>
</comment>
<comment type="subunit">
    <text evidence="1">Heterodimer of sae1 and uba2/sae2. The heterodimer corresponds to the two domains that are encoded on a single polypeptide chain in ubiquitin-activating enzyme E1. Interacts with ube2i (By similarity).</text>
</comment>
<comment type="subcellular location">
    <subcellularLocation>
        <location evidence="1">Cytoplasm</location>
    </subcellularLocation>
    <subcellularLocation>
        <location evidence="1">Nucleus</location>
    </subcellularLocation>
    <text evidence="1">Shuttles between the cytoplasm and the nucleus, sumoylation is required either for nuclear translocation or nuclear retention.</text>
</comment>
<comment type="alternative products">
    <event type="alternative splicing"/>
    <isoform>
        <id>Q7SXG4-1</id>
        <name>1</name>
        <sequence type="displayed"/>
    </isoform>
    <isoform>
        <id>Q7SXG4-2</id>
        <name>2</name>
        <sequence type="described" ref="VSP_034008"/>
    </isoform>
</comment>
<comment type="tissue specificity">
    <text evidence="6">Expressed in eye, brain and pectoral fins.</text>
</comment>
<comment type="PTM">
    <text evidence="1">Sumoylated with SUMO1 and SUMO2/3 and by UBC9. Sumoylation at Lys-237 inhibits enzymatic activity. Sumoylation at the C-terminal lysine cluster plays an essential role in nuclear trafficking (By similarity).</text>
</comment>
<comment type="disruption phenotype">
    <text evidence="6">Knockout animals show deficient growth, microcephaly, microphthalmia, mandibular hypoplasia and abnormal fins.</text>
</comment>
<comment type="similarity">
    <text evidence="8">Belongs to the ubiquitin-activating E1 family.</text>
</comment>
<gene>
    <name type="primary">uba2</name>
    <name type="synonym">sae2</name>
    <name type="synonym">sae2b</name>
    <name type="synonym">uble1b</name>
    <name type="ORF">si:ch211-149o7.1</name>
    <name type="ORF">zgc:66354</name>
</gene>